<keyword id="KW-0134">Cell wall</keyword>
<keyword id="KW-0903">Direct protein sequencing</keyword>
<keyword id="KW-1185">Reference proteome</keyword>
<keyword id="KW-0964">Secreted</keyword>
<organism>
    <name type="scientific">Solanum lycopersicum</name>
    <name type="common">Tomato</name>
    <name type="synonym">Lycopersicon esculentum</name>
    <dbReference type="NCBI Taxonomy" id="4081"/>
    <lineage>
        <taxon>Eukaryota</taxon>
        <taxon>Viridiplantae</taxon>
        <taxon>Streptophyta</taxon>
        <taxon>Embryophyta</taxon>
        <taxon>Tracheophyta</taxon>
        <taxon>Spermatophyta</taxon>
        <taxon>Magnoliopsida</taxon>
        <taxon>eudicotyledons</taxon>
        <taxon>Gunneridae</taxon>
        <taxon>Pentapetalae</taxon>
        <taxon>asterids</taxon>
        <taxon>lamiids</taxon>
        <taxon>Solanales</taxon>
        <taxon>Solanaceae</taxon>
        <taxon>Solanoideae</taxon>
        <taxon>Solaneae</taxon>
        <taxon>Solanum</taxon>
        <taxon>Solanum subgen. Lycopersicon</taxon>
    </lineage>
</organism>
<protein>
    <recommendedName>
        <fullName>66 kDa cell wall protein</fullName>
    </recommendedName>
</protein>
<accession>P80816</accession>
<evidence type="ECO:0000269" key="1">
    <source>
    </source>
</evidence>
<evidence type="ECO:0000303" key="2">
    <source>
    </source>
</evidence>
<evidence type="ECO:0000305" key="3"/>
<sequence length="18" mass="2177">GYMKYKDPKQPLLGRRXD</sequence>
<name>CWP20_SOLLC</name>
<comment type="subcellular location">
    <subcellularLocation>
        <location evidence="1">Secreted</location>
        <location evidence="1">Cell wall</location>
    </subcellularLocation>
</comment>
<dbReference type="InParanoid" id="P80816"/>
<dbReference type="Proteomes" id="UP000004994">
    <property type="component" value="Unplaced"/>
</dbReference>
<dbReference type="GO" id="GO:0005576">
    <property type="term" value="C:extracellular region"/>
    <property type="evidence" value="ECO:0007669"/>
    <property type="project" value="UniProtKB-KW"/>
</dbReference>
<feature type="chain" id="PRO_0000079691" description="66 kDa cell wall protein">
    <location>
        <begin position="1"/>
        <end position="18" status="greater than"/>
    </location>
</feature>
<feature type="non-terminal residue" evidence="2">
    <location>
        <position position="18"/>
    </location>
</feature>
<proteinExistence type="evidence at protein level"/>
<reference evidence="3" key="1">
    <citation type="journal article" date="1997" name="J. Biol. Chem.">
        <title>Differential extraction and protein sequencing reveals major differences in patterns of primary cell wall proteins from plants.</title>
        <authorList>
            <person name="Robertson D."/>
            <person name="Mitchell G.P."/>
            <person name="Gilroy J.S."/>
            <person name="Gerrish C."/>
            <person name="Bolwell G.P."/>
            <person name="Slabas A.R."/>
        </authorList>
    </citation>
    <scope>PROTEIN SEQUENCE</scope>
    <scope>SUBCELLULAR LOCATION</scope>
</reference>